<sequence length="889" mass="98128">MKNPFAHLAEPLDPAQPGKKFFNLNKLEDSRYGRLPFSIRVLLEAAVRNCDEFLVKKNDIENILNWSIMQHKSIEVPFKPARVILQDFTGVPAVVDFAAMRDAVKKLGGNPEKINPVCPADLVIDHSIQVHFNRRADSLQKNQDLEFERNRERFEFLKWGSQAFCNMRIIPPGSGIIHQVNLEYLARVVFDQDGCYYPDSLVGTDSHTTMIDGLGVLGWGVGGIEAEAVMLGQPISMVLPQVIGYKLMGKPHPLVTSTDIVLTITKHLRQVGVVGKFVEFFGPGVAQLSIADRATIANMCPEYGATAAFFPVDDVSIAYLVQTGREEDKVKHIKRYLQAVGMFRDFSDSSQDPDFTQVVELDLKTVVPCCSGPKRPQDKVAVSEIEKDFESCLGAKQGFKGFQVAPDHHNDHKTFIYNDSEFTLAHGSVVIAAITSCTNTSNPSVMLGAGLLAKKAVEAGLNVKPYVKTSLSPGSGVVTYYLRESGVMPYLSQLGFDVVGYGCMTCIGNSGPLPEPVVEAITQGDLVAVGVLSGNRNFEGRVHPNTRANYLASPPLVIAYAIAGTVRIDFEKEPLGVNAQGQQVFLKDIWPTRDEIQEVERKYVIPGMFKEVYQKIETVNKSWNALAAPSEKLYAWNPKSTYIKSPPFFESLTLDLQPPKSIVDAYVLLNLGDSVTTDHISPAGNIARNSPAARYLTNRGLTPRDFNSYGSRRGNDAIMARGTFANIRLLNKFLNKQAPQTVHLPSGETLDVFDAAERYQQAGLPLIVLAGKEYGSGSSRDWAAKGPFLLGIKAVLAESYERTHCSNLVGMGVIPLEYLPGETADSLGLTGRERYTIHIPEHLKPRMKVQIKLDTGKTFQAVMRFDTDVELTYFHNGGILNYMIRKMAQ</sequence>
<keyword id="KW-0004">4Fe-4S</keyword>
<keyword id="KW-0963">Cytoplasm</keyword>
<keyword id="KW-0903">Direct protein sequencing</keyword>
<keyword id="KW-0408">Iron</keyword>
<keyword id="KW-0411">Iron-sulfur</keyword>
<keyword id="KW-0456">Lyase</keyword>
<keyword id="KW-0479">Metal-binding</keyword>
<keyword id="KW-1185">Reference proteome</keyword>
<keyword id="KW-0694">RNA-binding</keyword>
<keyword id="KW-0816">Tricarboxylic acid cycle</keyword>
<comment type="function">
    <text evidence="2 3">Bifunctional iron sensor that switches between 2 activities depending on iron availability (By similarity). Iron deprivation, promotes its mRNA binding activity through which it regulates the expression of genes involved in iron uptake, sequestration and utilization (PubMed:16144863). Binds to iron-responsive elements (IRES) in the untranslated region of target mRNAs preventing for instance the translation of ferritin and aminolevulinic acid synthase and stabilizing the transferrin receptor mRNA (PubMed:16144863).</text>
</comment>
<comment type="function">
    <text evidence="2">Conversely, when cellular iron levels are high, binds a 4Fe-4S cluster which precludes RNA binding activity and promotes the aconitase activity, the isomerization of citrate to isocitrate via cis-aconitate.</text>
</comment>
<comment type="catalytic activity">
    <reaction evidence="2">
        <text>citrate = D-threo-isocitrate</text>
        <dbReference type="Rhea" id="RHEA:10336"/>
        <dbReference type="ChEBI" id="CHEBI:15562"/>
        <dbReference type="ChEBI" id="CHEBI:16947"/>
        <dbReference type="EC" id="4.2.1.3"/>
    </reaction>
</comment>
<comment type="cofactor">
    <cofactor evidence="2">
        <name>[4Fe-4S] cluster</name>
        <dbReference type="ChEBI" id="CHEBI:49883"/>
    </cofactor>
    <text evidence="2">Binds 1 [4Fe-4S] cluster per subunit.</text>
</comment>
<comment type="subunit">
    <text evidence="2">Interacts (when associated with the 4Fe-4S) with FBXL5. Interacts with frataxin(81-210).</text>
</comment>
<comment type="subcellular location">
    <subcellularLocation>
        <location evidence="3">Cytoplasm</location>
        <location evidence="3">Cytosol</location>
    </subcellularLocation>
</comment>
<comment type="similarity">
    <text evidence="4">Belongs to the aconitase/IPM isomerase family.</text>
</comment>
<evidence type="ECO:0000250" key="1"/>
<evidence type="ECO:0000250" key="2">
    <source>
        <dbReference type="UniProtKB" id="P21399"/>
    </source>
</evidence>
<evidence type="ECO:0000269" key="3">
    <source>
    </source>
</evidence>
<evidence type="ECO:0000305" key="4"/>
<proteinExistence type="evidence at protein level"/>
<organism>
    <name type="scientific">Rattus norvegicus</name>
    <name type="common">Rat</name>
    <dbReference type="NCBI Taxonomy" id="10116"/>
    <lineage>
        <taxon>Eukaryota</taxon>
        <taxon>Metazoa</taxon>
        <taxon>Chordata</taxon>
        <taxon>Craniata</taxon>
        <taxon>Vertebrata</taxon>
        <taxon>Euteleostomi</taxon>
        <taxon>Mammalia</taxon>
        <taxon>Eutheria</taxon>
        <taxon>Euarchontoglires</taxon>
        <taxon>Glires</taxon>
        <taxon>Rodentia</taxon>
        <taxon>Myomorpha</taxon>
        <taxon>Muroidea</taxon>
        <taxon>Muridae</taxon>
        <taxon>Murinae</taxon>
        <taxon>Rattus</taxon>
    </lineage>
</organism>
<gene>
    <name type="primary">Aco1</name>
    <name type="synonym">Ireb1</name>
    <name type="synonym">Irebp</name>
</gene>
<reference key="1">
    <citation type="journal article" date="1992" name="J. Biol. Chem.">
        <title>The iron-responsive element binding protein. Purification, cloning, and regulation in rat liver.</title>
        <authorList>
            <person name="Yu Y."/>
            <person name="Radisky E.S."/>
            <person name="Leibold E.A."/>
        </authorList>
    </citation>
    <scope>NUCLEOTIDE SEQUENCE [MRNA]</scope>
    <scope>FUNCTION</scope>
    <source>
        <strain>Sprague-Dawley</strain>
        <tissue>Liver</tissue>
    </source>
</reference>
<reference key="2">
    <citation type="submission" date="2007-04" db="UniProtKB">
        <authorList>
            <person name="Lubec G."/>
            <person name="Diao W."/>
        </authorList>
    </citation>
    <scope>PROTEIN SEQUENCE OF 114-134 AND 277-293</scope>
    <scope>IDENTIFICATION BY MASS SPECTROMETRY</scope>
    <source>
        <strain>Sprague-Dawley</strain>
        <tissue>Hippocampus</tissue>
    </source>
</reference>
<reference key="3">
    <citation type="journal article" date="2005" name="J. Cell Sci.">
        <title>Subcellular localization of iron regulatory proteins to Golgi and ER membranes.</title>
        <authorList>
            <person name="Patton S.M."/>
            <person name="Pinero D.J."/>
            <person name="Surguladze N."/>
            <person name="Beard J."/>
            <person name="Connor J.R."/>
        </authorList>
    </citation>
    <scope>FUNCTION</scope>
    <scope>SUBCELLULAR LOCATION</scope>
</reference>
<protein>
    <recommendedName>
        <fullName evidence="4">Cytoplasmic aconitate hydratase</fullName>
        <shortName>Aconitase</shortName>
        <ecNumber evidence="2">4.2.1.3</ecNumber>
    </recommendedName>
    <alternativeName>
        <fullName>Citrate hydro-lyase</fullName>
    </alternativeName>
    <alternativeName>
        <fullName>Iron regulatory protein 1</fullName>
        <shortName>IRP1</shortName>
    </alternativeName>
    <alternativeName>
        <fullName>Iron-responsive element-binding protein 1</fullName>
        <shortName>IRE-BP 1</shortName>
    </alternativeName>
</protein>
<name>ACOHC_RAT</name>
<accession>Q63270</accession>
<dbReference type="EC" id="4.2.1.3" evidence="2"/>
<dbReference type="EMBL" id="L23874">
    <property type="protein sequence ID" value="AAA41449.1"/>
    <property type="molecule type" value="mRNA"/>
</dbReference>
<dbReference type="PIR" id="A44154">
    <property type="entry name" value="A44154"/>
</dbReference>
<dbReference type="RefSeq" id="NP_059017.1">
    <property type="nucleotide sequence ID" value="NM_017321.1"/>
</dbReference>
<dbReference type="SMR" id="Q63270"/>
<dbReference type="BioGRID" id="248407">
    <property type="interactions" value="1"/>
</dbReference>
<dbReference type="FunCoup" id="Q63270">
    <property type="interactions" value="1853"/>
</dbReference>
<dbReference type="STRING" id="10116.ENSRNOP00000008337"/>
<dbReference type="iPTMnet" id="Q63270"/>
<dbReference type="PhosphoSitePlus" id="Q63270"/>
<dbReference type="SwissPalm" id="Q63270"/>
<dbReference type="jPOST" id="Q63270"/>
<dbReference type="PaxDb" id="10116-ENSRNOP00000008337"/>
<dbReference type="GeneID" id="50655"/>
<dbReference type="KEGG" id="rno:50655"/>
<dbReference type="UCSC" id="RGD:2019">
    <property type="organism name" value="rat"/>
</dbReference>
<dbReference type="AGR" id="RGD:2019"/>
<dbReference type="CTD" id="48"/>
<dbReference type="RGD" id="2019">
    <property type="gene designation" value="Aco1"/>
</dbReference>
<dbReference type="eggNOG" id="KOG0452">
    <property type="taxonomic scope" value="Eukaryota"/>
</dbReference>
<dbReference type="InParanoid" id="Q63270"/>
<dbReference type="BRENDA" id="4.2.1.3">
    <property type="organism ID" value="5301"/>
</dbReference>
<dbReference type="Reactome" id="R-RNO-389542">
    <property type="pathway name" value="NADPH regeneration"/>
</dbReference>
<dbReference type="Reactome" id="R-RNO-917937">
    <property type="pathway name" value="Iron uptake and transport"/>
</dbReference>
<dbReference type="SABIO-RK" id="Q63270"/>
<dbReference type="PRO" id="PR:Q63270"/>
<dbReference type="Proteomes" id="UP000002494">
    <property type="component" value="Unplaced"/>
</dbReference>
<dbReference type="GO" id="GO:0005737">
    <property type="term" value="C:cytoplasm"/>
    <property type="evidence" value="ECO:0000266"/>
    <property type="project" value="RGD"/>
</dbReference>
<dbReference type="GO" id="GO:0005829">
    <property type="term" value="C:cytosol"/>
    <property type="evidence" value="ECO:0000266"/>
    <property type="project" value="RGD"/>
</dbReference>
<dbReference type="GO" id="GO:0005783">
    <property type="term" value="C:endoplasmic reticulum"/>
    <property type="evidence" value="ECO:0000266"/>
    <property type="project" value="RGD"/>
</dbReference>
<dbReference type="GO" id="GO:0005794">
    <property type="term" value="C:Golgi apparatus"/>
    <property type="evidence" value="ECO:0000314"/>
    <property type="project" value="MGI"/>
</dbReference>
<dbReference type="GO" id="GO:0005739">
    <property type="term" value="C:mitochondrion"/>
    <property type="evidence" value="ECO:0000318"/>
    <property type="project" value="GO_Central"/>
</dbReference>
<dbReference type="GO" id="GO:0051538">
    <property type="term" value="F:3 iron, 4 sulfur cluster binding"/>
    <property type="evidence" value="ECO:0000266"/>
    <property type="project" value="RGD"/>
</dbReference>
<dbReference type="GO" id="GO:0051539">
    <property type="term" value="F:4 iron, 4 sulfur cluster binding"/>
    <property type="evidence" value="ECO:0000250"/>
    <property type="project" value="UniProtKB"/>
</dbReference>
<dbReference type="GO" id="GO:0003994">
    <property type="term" value="F:aconitate hydratase activity"/>
    <property type="evidence" value="ECO:0000314"/>
    <property type="project" value="RGD"/>
</dbReference>
<dbReference type="GO" id="GO:0030350">
    <property type="term" value="F:iron-responsive element binding"/>
    <property type="evidence" value="ECO:0000314"/>
    <property type="project" value="RGD"/>
</dbReference>
<dbReference type="GO" id="GO:0051536">
    <property type="term" value="F:iron-sulfur cluster binding"/>
    <property type="evidence" value="ECO:0000314"/>
    <property type="project" value="RGD"/>
</dbReference>
<dbReference type="GO" id="GO:0046872">
    <property type="term" value="F:metal ion binding"/>
    <property type="evidence" value="ECO:0007669"/>
    <property type="project" value="UniProtKB-KW"/>
</dbReference>
<dbReference type="GO" id="GO:0048027">
    <property type="term" value="F:mRNA 5'-UTR binding"/>
    <property type="evidence" value="ECO:0000314"/>
    <property type="project" value="RGD"/>
</dbReference>
<dbReference type="GO" id="GO:0000900">
    <property type="term" value="F:mRNA regulatory element binding translation repressor activity"/>
    <property type="evidence" value="ECO:0000266"/>
    <property type="project" value="RGD"/>
</dbReference>
<dbReference type="GO" id="GO:0003723">
    <property type="term" value="F:RNA binding"/>
    <property type="evidence" value="ECO:0000314"/>
    <property type="project" value="RGD"/>
</dbReference>
<dbReference type="GO" id="GO:0006101">
    <property type="term" value="P:citrate metabolic process"/>
    <property type="evidence" value="ECO:0000250"/>
    <property type="project" value="UniProtKB"/>
</dbReference>
<dbReference type="GO" id="GO:0050892">
    <property type="term" value="P:intestinal absorption"/>
    <property type="evidence" value="ECO:0000266"/>
    <property type="project" value="RGD"/>
</dbReference>
<dbReference type="GO" id="GO:0006879">
    <property type="term" value="P:intracellular iron ion homeostasis"/>
    <property type="evidence" value="ECO:0000314"/>
    <property type="project" value="RGD"/>
</dbReference>
<dbReference type="GO" id="GO:0001889">
    <property type="term" value="P:liver development"/>
    <property type="evidence" value="ECO:0000270"/>
    <property type="project" value="RGD"/>
</dbReference>
<dbReference type="GO" id="GO:0009791">
    <property type="term" value="P:post-embryonic development"/>
    <property type="evidence" value="ECO:0000266"/>
    <property type="project" value="RGD"/>
</dbReference>
<dbReference type="GO" id="GO:0010468">
    <property type="term" value="P:regulation of gene expression"/>
    <property type="evidence" value="ECO:0000266"/>
    <property type="project" value="RGD"/>
</dbReference>
<dbReference type="GO" id="GO:0006417">
    <property type="term" value="P:regulation of translation"/>
    <property type="evidence" value="ECO:0000266"/>
    <property type="project" value="RGD"/>
</dbReference>
<dbReference type="GO" id="GO:0010040">
    <property type="term" value="P:response to iron(II) ion"/>
    <property type="evidence" value="ECO:0000250"/>
    <property type="project" value="UniProtKB"/>
</dbReference>
<dbReference type="GO" id="GO:0006099">
    <property type="term" value="P:tricarboxylic acid cycle"/>
    <property type="evidence" value="ECO:0007669"/>
    <property type="project" value="UniProtKB-KW"/>
</dbReference>
<dbReference type="CDD" id="cd01586">
    <property type="entry name" value="AcnA_IRP"/>
    <property type="match status" value="1"/>
</dbReference>
<dbReference type="CDD" id="cd01580">
    <property type="entry name" value="AcnA_IRP_Swivel"/>
    <property type="match status" value="1"/>
</dbReference>
<dbReference type="FunFam" id="3.30.499.10:FF:000002">
    <property type="entry name" value="Aconitate hydratase"/>
    <property type="match status" value="1"/>
</dbReference>
<dbReference type="FunFam" id="3.30.499.10:FF:000005">
    <property type="entry name" value="cytoplasmic aconitate hydratase"/>
    <property type="match status" value="1"/>
</dbReference>
<dbReference type="FunFam" id="3.20.19.10:FF:000005">
    <property type="entry name" value="Iron-responsive element-binding protein 2"/>
    <property type="match status" value="1"/>
</dbReference>
<dbReference type="Gene3D" id="6.10.190.10">
    <property type="match status" value="1"/>
</dbReference>
<dbReference type="Gene3D" id="3.30.499.10">
    <property type="entry name" value="Aconitase, domain 3"/>
    <property type="match status" value="2"/>
</dbReference>
<dbReference type="Gene3D" id="3.20.19.10">
    <property type="entry name" value="Aconitase, domain 4"/>
    <property type="match status" value="1"/>
</dbReference>
<dbReference type="InterPro" id="IPR044137">
    <property type="entry name" value="AcnA_IRP_Swivel"/>
</dbReference>
<dbReference type="InterPro" id="IPR015931">
    <property type="entry name" value="Acnase/IPM_dHydase_lsu_aba_1/3"/>
</dbReference>
<dbReference type="InterPro" id="IPR001030">
    <property type="entry name" value="Acoase/IPM_deHydtase_lsu_aba"/>
</dbReference>
<dbReference type="InterPro" id="IPR015928">
    <property type="entry name" value="Aconitase/3IPM_dehydase_swvl"/>
</dbReference>
<dbReference type="InterPro" id="IPR006249">
    <property type="entry name" value="Aconitase/IRP2"/>
</dbReference>
<dbReference type="InterPro" id="IPR018136">
    <property type="entry name" value="Aconitase_4Fe-4S_BS"/>
</dbReference>
<dbReference type="InterPro" id="IPR036008">
    <property type="entry name" value="Aconitase_4Fe-4S_dom"/>
</dbReference>
<dbReference type="InterPro" id="IPR000573">
    <property type="entry name" value="AconitaseA/IPMdHydase_ssu_swvl"/>
</dbReference>
<dbReference type="NCBIfam" id="TIGR01341">
    <property type="entry name" value="aconitase_1"/>
    <property type="match status" value="1"/>
</dbReference>
<dbReference type="NCBIfam" id="NF006757">
    <property type="entry name" value="PRK09277.1"/>
    <property type="match status" value="1"/>
</dbReference>
<dbReference type="NCBIfam" id="NF009520">
    <property type="entry name" value="PRK12881.1"/>
    <property type="match status" value="1"/>
</dbReference>
<dbReference type="PANTHER" id="PTHR11670">
    <property type="entry name" value="ACONITASE/IRON-RESPONSIVE ELEMENT FAMILY MEMBER"/>
    <property type="match status" value="1"/>
</dbReference>
<dbReference type="Pfam" id="PF00330">
    <property type="entry name" value="Aconitase"/>
    <property type="match status" value="1"/>
</dbReference>
<dbReference type="Pfam" id="PF00694">
    <property type="entry name" value="Aconitase_C"/>
    <property type="match status" value="1"/>
</dbReference>
<dbReference type="PRINTS" id="PR00415">
    <property type="entry name" value="ACONITASE"/>
</dbReference>
<dbReference type="SUPFAM" id="SSF53732">
    <property type="entry name" value="Aconitase iron-sulfur domain"/>
    <property type="match status" value="1"/>
</dbReference>
<dbReference type="SUPFAM" id="SSF52016">
    <property type="entry name" value="LeuD/IlvD-like"/>
    <property type="match status" value="1"/>
</dbReference>
<dbReference type="PROSITE" id="PS00450">
    <property type="entry name" value="ACONITASE_1"/>
    <property type="match status" value="1"/>
</dbReference>
<dbReference type="PROSITE" id="PS01244">
    <property type="entry name" value="ACONITASE_2"/>
    <property type="match status" value="1"/>
</dbReference>
<feature type="chain" id="PRO_0000076683" description="Cytoplasmic aconitate hydratase">
    <location>
        <begin position="1"/>
        <end position="889"/>
    </location>
</feature>
<feature type="binding site" evidence="1">
    <location>
        <position position="86"/>
    </location>
    <ligand>
        <name>substrate</name>
    </ligand>
</feature>
<feature type="binding site" evidence="1">
    <location>
        <begin position="205"/>
        <end position="207"/>
    </location>
    <ligand>
        <name>substrate</name>
    </ligand>
</feature>
<feature type="binding site" evidence="1">
    <location>
        <position position="437"/>
    </location>
    <ligand>
        <name>[4Fe-4S] cluster</name>
        <dbReference type="ChEBI" id="CHEBI:49883"/>
    </ligand>
</feature>
<feature type="binding site" evidence="1">
    <location>
        <position position="503"/>
    </location>
    <ligand>
        <name>[4Fe-4S] cluster</name>
        <dbReference type="ChEBI" id="CHEBI:49883"/>
    </ligand>
</feature>
<feature type="binding site" evidence="1">
    <location>
        <position position="506"/>
    </location>
    <ligand>
        <name>[4Fe-4S] cluster</name>
        <dbReference type="ChEBI" id="CHEBI:49883"/>
    </ligand>
</feature>
<feature type="binding site" evidence="1">
    <location>
        <position position="536"/>
    </location>
    <ligand>
        <name>substrate</name>
    </ligand>
</feature>
<feature type="binding site" evidence="1">
    <location>
        <position position="541"/>
    </location>
    <ligand>
        <name>substrate</name>
    </ligand>
</feature>
<feature type="binding site" evidence="1">
    <location>
        <position position="699"/>
    </location>
    <ligand>
        <name>substrate</name>
    </ligand>
</feature>
<feature type="binding site" evidence="1">
    <location>
        <begin position="779"/>
        <end position="780"/>
    </location>
    <ligand>
        <name>substrate</name>
    </ligand>
</feature>
<feature type="sequence conflict" description="In Ref. 2; AA sequence." evidence="4" ref="2">
    <original>H</original>
    <variation>D</variation>
    <location>
        <position position="131"/>
    </location>
</feature>